<gene>
    <name type="primary">COIII</name>
</gene>
<comment type="function">
    <text evidence="1">Component of the cytochrome c oxidase, the last enzyme in the mitochondrial electron transport chain which drives oxidative phosphorylation. The respiratory chain contains 3 multisubunit complexes succinate dehydrogenase (complex II, CII), ubiquinol-cytochrome c oxidoreductase (cytochrome b-c1 complex, complex III, CIII) and cytochrome c oxidase (complex IV, CIV), that cooperate to transfer electrons derived from NADH and succinate to molecular oxygen, creating an electrochemical gradient over the inner membrane that drives transmembrane transport and the ATP synthase. Cytochrome c oxidase is the component of the respiratory chain that catalyzes the reduction of oxygen to water. Electrons originating from reduced cytochrome c in the intermembrane space (IMS) are transferred via the dinuclear copper A center (CU(A)) of subunit 2 and heme A of subunit 1 to the active site in subunit 1, a binuclear center (BNC) formed by heme A3 and copper B (CU(B)). The BNC reduces molecular oxygen to 2 water molecules using 4 electrons from cytochrome c in the IMS and 4 protons from the mitochondrial matrix.</text>
</comment>
<comment type="catalytic activity">
    <reaction evidence="1">
        <text>4 Fe(II)-[cytochrome c] + O2 + 8 H(+)(in) = 4 Fe(III)-[cytochrome c] + 2 H2O + 4 H(+)(out)</text>
        <dbReference type="Rhea" id="RHEA:11436"/>
        <dbReference type="Rhea" id="RHEA-COMP:10350"/>
        <dbReference type="Rhea" id="RHEA-COMP:14399"/>
        <dbReference type="ChEBI" id="CHEBI:15377"/>
        <dbReference type="ChEBI" id="CHEBI:15378"/>
        <dbReference type="ChEBI" id="CHEBI:15379"/>
        <dbReference type="ChEBI" id="CHEBI:29033"/>
        <dbReference type="ChEBI" id="CHEBI:29034"/>
        <dbReference type="EC" id="7.1.1.9"/>
    </reaction>
    <physiologicalReaction direction="left-to-right" evidence="1">
        <dbReference type="Rhea" id="RHEA:11437"/>
    </physiologicalReaction>
</comment>
<comment type="subunit">
    <text evidence="1">Component of the cytochrome c oxidase (complex IV, CIV), a multisubunit enzyme composed of a catalytic core of 3 subunits and several supernumerary subunits. The complex exists as a monomer or a dimer and forms supercomplexes (SCs) in the inner mitochondrial membrane with ubiquinol-cytochrome c oxidoreductase (cytochrome b-c1 complex, complex III, CIII).</text>
</comment>
<comment type="subcellular location">
    <subcellularLocation>
        <location evidence="1">Mitochondrion inner membrane</location>
        <topology evidence="1">Multi-pass membrane protein</topology>
    </subcellularLocation>
</comment>
<comment type="similarity">
    <text evidence="3">Belongs to the cytochrome c oxidase subunit 3 family.</text>
</comment>
<reference key="1">
    <citation type="journal article" date="1988" name="Nucleic Acids Res.">
        <title>Genome organization of Artemia mitochondrial DNA.</title>
        <authorList>
            <person name="Batuecas B."/>
            <person name="Garesse R."/>
            <person name="Calleja M."/>
            <person name="Valverde J.R."/>
            <person name="Marco R."/>
        </authorList>
    </citation>
    <scope>NUCLEOTIDE SEQUENCE [GENOMIC DNA]</scope>
</reference>
<geneLocation type="mitochondrion"/>
<organism>
    <name type="scientific">Artemia salina</name>
    <name type="common">Brine shrimp</name>
    <dbReference type="NCBI Taxonomy" id="85549"/>
    <lineage>
        <taxon>Eukaryota</taxon>
        <taxon>Metazoa</taxon>
        <taxon>Ecdysozoa</taxon>
        <taxon>Arthropoda</taxon>
        <taxon>Crustacea</taxon>
        <taxon>Branchiopoda</taxon>
        <taxon>Anostraca</taxon>
        <taxon>Artemiidae</taxon>
        <taxon>Artemia</taxon>
    </lineage>
</organism>
<protein>
    <recommendedName>
        <fullName>Cytochrome c oxidase subunit 3</fullName>
        <ecNumber>7.1.1.9</ecNumber>
    </recommendedName>
    <alternativeName>
        <fullName>Cytochrome c oxidase polypeptide III</fullName>
    </alternativeName>
</protein>
<dbReference type="EC" id="7.1.1.9"/>
<dbReference type="EMBL" id="X07666">
    <property type="protein sequence ID" value="CAA30513.1"/>
    <property type="molecule type" value="Genomic_DNA"/>
</dbReference>
<dbReference type="SMR" id="Q33845"/>
<dbReference type="GO" id="GO:0005743">
    <property type="term" value="C:mitochondrial inner membrane"/>
    <property type="evidence" value="ECO:0007669"/>
    <property type="project" value="UniProtKB-SubCell"/>
</dbReference>
<dbReference type="GO" id="GO:0004129">
    <property type="term" value="F:cytochrome-c oxidase activity"/>
    <property type="evidence" value="ECO:0007669"/>
    <property type="project" value="UniProtKB-EC"/>
</dbReference>
<dbReference type="GO" id="GO:0006123">
    <property type="term" value="P:mitochondrial electron transport, cytochrome c to oxygen"/>
    <property type="evidence" value="ECO:0007669"/>
    <property type="project" value="TreeGrafter"/>
</dbReference>
<dbReference type="CDD" id="cd01665">
    <property type="entry name" value="Cyt_c_Oxidase_III"/>
    <property type="match status" value="1"/>
</dbReference>
<dbReference type="Gene3D" id="1.20.120.80">
    <property type="entry name" value="Cytochrome c oxidase, subunit III, four-helix bundle"/>
    <property type="match status" value="1"/>
</dbReference>
<dbReference type="InterPro" id="IPR024791">
    <property type="entry name" value="Cyt_c/ubiquinol_Oxase_su3"/>
</dbReference>
<dbReference type="InterPro" id="IPR033945">
    <property type="entry name" value="Cyt_c_oxase_su3_dom"/>
</dbReference>
<dbReference type="InterPro" id="IPR000298">
    <property type="entry name" value="Cyt_c_oxidase-like_su3"/>
</dbReference>
<dbReference type="InterPro" id="IPR035973">
    <property type="entry name" value="Cyt_c_oxidase_su3-like_sf"/>
</dbReference>
<dbReference type="InterPro" id="IPR013833">
    <property type="entry name" value="Cyt_c_oxidase_su3_a-hlx"/>
</dbReference>
<dbReference type="PANTHER" id="PTHR11403:SF7">
    <property type="entry name" value="CYTOCHROME C OXIDASE SUBUNIT 3"/>
    <property type="match status" value="1"/>
</dbReference>
<dbReference type="PANTHER" id="PTHR11403">
    <property type="entry name" value="CYTOCHROME C OXIDASE SUBUNIT III"/>
    <property type="match status" value="1"/>
</dbReference>
<dbReference type="Pfam" id="PF00510">
    <property type="entry name" value="COX3"/>
    <property type="match status" value="1"/>
</dbReference>
<dbReference type="SUPFAM" id="SSF81452">
    <property type="entry name" value="Cytochrome c oxidase subunit III-like"/>
    <property type="match status" value="1"/>
</dbReference>
<dbReference type="PROSITE" id="PS50253">
    <property type="entry name" value="COX3"/>
    <property type="match status" value="1"/>
</dbReference>
<sequence length="115" mass="12976">LSALLNTSILLRSGVTVTWAHHALMENNFDQCLQGLLFTVLLGLYFSFLQGLEYMEASFTIADSIYGSTFFLATGFHGLHVLIGTIFLMICILRHLSATFSQHHFGFEAAAWYWH</sequence>
<evidence type="ECO:0000250" key="1">
    <source>
        <dbReference type="UniProtKB" id="P00420"/>
    </source>
</evidence>
<evidence type="ECO:0000255" key="2"/>
<evidence type="ECO:0000305" key="3"/>
<name>COX3_ARTSA</name>
<keyword id="KW-0472">Membrane</keyword>
<keyword id="KW-0496">Mitochondrion</keyword>
<keyword id="KW-0999">Mitochondrion inner membrane</keyword>
<keyword id="KW-1278">Translocase</keyword>
<keyword id="KW-0812">Transmembrane</keyword>
<keyword id="KW-1133">Transmembrane helix</keyword>
<proteinExistence type="inferred from homology"/>
<feature type="chain" id="PRO_0000183739" description="Cytochrome c oxidase subunit 3">
    <location>
        <begin position="1" status="less than"/>
        <end position="115" status="greater than"/>
    </location>
</feature>
<feature type="transmembrane region" description="Helical" evidence="2">
    <location>
        <begin position="32"/>
        <end position="52"/>
    </location>
</feature>
<feature type="transmembrane region" description="Helical" evidence="2">
    <location>
        <begin position="70"/>
        <end position="90"/>
    </location>
</feature>
<feature type="non-terminal residue">
    <location>
        <position position="1"/>
    </location>
</feature>
<feature type="non-terminal residue">
    <location>
        <position position="115"/>
    </location>
</feature>
<accession>Q33845</accession>